<accession>Q9D3N8</accession>
<accession>Q8BUR0</accession>
<accession>Q8VI03</accession>
<accession>Q9D3Q5</accession>
<accession>Q9D8L8</accession>
<proteinExistence type="evidence at protein level"/>
<evidence type="ECO:0000255" key="1">
    <source>
        <dbReference type="PROSITE-ProRule" id="PRU00163"/>
    </source>
</evidence>
<evidence type="ECO:0000269" key="2">
    <source>
    </source>
</evidence>
<evidence type="ECO:0000303" key="3">
    <source>
    </source>
</evidence>
<evidence type="ECO:0000303" key="4">
    <source>
    </source>
</evidence>
<evidence type="ECO:0000303" key="5">
    <source>
    </source>
</evidence>
<evidence type="ECO:0000305" key="6"/>
<gene>
    <name type="primary">Grtp1</name>
    <name type="synonym">Tbc1d6</name>
</gene>
<dbReference type="EMBL" id="AF329833">
    <property type="protein sequence ID" value="AAL67673.1"/>
    <property type="molecule type" value="mRNA"/>
</dbReference>
<dbReference type="EMBL" id="AK007905">
    <property type="protein sequence ID" value="BAB25339.1"/>
    <property type="molecule type" value="mRNA"/>
</dbReference>
<dbReference type="EMBL" id="AK017197">
    <property type="protein sequence ID" value="BAB30630.1"/>
    <property type="molecule type" value="mRNA"/>
</dbReference>
<dbReference type="EMBL" id="AK017251">
    <property type="protein sequence ID" value="BAB30653.1"/>
    <property type="molecule type" value="mRNA"/>
</dbReference>
<dbReference type="EMBL" id="AK082863">
    <property type="protein sequence ID" value="BAC38658.1"/>
    <property type="molecule type" value="mRNA"/>
</dbReference>
<dbReference type="EMBL" id="AK149322">
    <property type="protein sequence ID" value="BAE28813.1"/>
    <property type="molecule type" value="mRNA"/>
</dbReference>
<dbReference type="EMBL" id="BC029096">
    <property type="protein sequence ID" value="AAH29096.1"/>
    <property type="molecule type" value="mRNA"/>
</dbReference>
<dbReference type="CCDS" id="CCDS22107.1">
    <molecule id="Q9D3N8-2"/>
</dbReference>
<dbReference type="CCDS" id="CCDS90375.1">
    <molecule id="Q9D3N8-1"/>
</dbReference>
<dbReference type="RefSeq" id="NP_001355787.1">
    <molecule id="Q9D3N8-1"/>
    <property type="nucleotide sequence ID" value="NM_001368858.1"/>
</dbReference>
<dbReference type="RefSeq" id="NP_080044.2">
    <molecule id="Q9D3N8-2"/>
    <property type="nucleotide sequence ID" value="NM_025768.2"/>
</dbReference>
<dbReference type="RefSeq" id="XP_006508914.1">
    <molecule id="Q9D3N8-4"/>
    <property type="nucleotide sequence ID" value="XM_006508851.5"/>
</dbReference>
<dbReference type="RefSeq" id="XP_017168426.1">
    <property type="nucleotide sequence ID" value="XM_017312937.1"/>
</dbReference>
<dbReference type="SMR" id="Q9D3N8"/>
<dbReference type="FunCoup" id="Q9D3N8">
    <property type="interactions" value="110"/>
</dbReference>
<dbReference type="IntAct" id="Q9D3N8">
    <property type="interactions" value="1"/>
</dbReference>
<dbReference type="STRING" id="10090.ENSMUSP00000148042"/>
<dbReference type="iPTMnet" id="Q9D3N8"/>
<dbReference type="PhosphoSitePlus" id="Q9D3N8"/>
<dbReference type="PaxDb" id="10090-ENSMUSP00000130324"/>
<dbReference type="PeptideAtlas" id="Q9D3N8"/>
<dbReference type="ProteomicsDB" id="271461">
    <molecule id="Q9D3N8-1"/>
</dbReference>
<dbReference type="ProteomicsDB" id="271462">
    <molecule id="Q9D3N8-2"/>
</dbReference>
<dbReference type="ProteomicsDB" id="271463">
    <molecule id="Q9D3N8-3"/>
</dbReference>
<dbReference type="ProteomicsDB" id="271464">
    <molecule id="Q9D3N8-4"/>
</dbReference>
<dbReference type="Antibodypedia" id="25922">
    <property type="antibodies" value="116 antibodies from 25 providers"/>
</dbReference>
<dbReference type="DNASU" id="66790"/>
<dbReference type="Ensembl" id="ENSMUST00000165605.4">
    <molecule id="Q9D3N8-1"/>
    <property type="protein sequence ID" value="ENSMUSP00000130324.4"/>
    <property type="gene ID" value="ENSMUSG00000038515.11"/>
</dbReference>
<dbReference type="Ensembl" id="ENSMUST00000210317.2">
    <molecule id="Q9D3N8-2"/>
    <property type="protein sequence ID" value="ENSMUSP00000148042.2"/>
    <property type="gene ID" value="ENSMUSG00000038515.11"/>
</dbReference>
<dbReference type="Ensembl" id="ENSMUST00000211128.2">
    <molecule id="Q9D3N8-4"/>
    <property type="protein sequence ID" value="ENSMUSP00000147337.2"/>
    <property type="gene ID" value="ENSMUSG00000038515.11"/>
</dbReference>
<dbReference type="GeneID" id="66790"/>
<dbReference type="KEGG" id="mmu:66790"/>
<dbReference type="UCSC" id="uc009kxc.1">
    <molecule id="Q9D3N8-3"/>
    <property type="organism name" value="mouse"/>
</dbReference>
<dbReference type="UCSC" id="uc009kxd.1">
    <molecule id="Q9D3N8-2"/>
    <property type="organism name" value="mouse"/>
</dbReference>
<dbReference type="UCSC" id="uc012fzv.1">
    <molecule id="Q9D3N8-1"/>
    <property type="organism name" value="mouse"/>
</dbReference>
<dbReference type="AGR" id="MGI:1914040"/>
<dbReference type="CTD" id="79774"/>
<dbReference type="MGI" id="MGI:1914040">
    <property type="gene designation" value="Grtp1"/>
</dbReference>
<dbReference type="VEuPathDB" id="HostDB:ENSMUSG00000038515"/>
<dbReference type="eggNOG" id="KOG2058">
    <property type="taxonomic scope" value="Eukaryota"/>
</dbReference>
<dbReference type="GeneTree" id="ENSGT00940000154927"/>
<dbReference type="HOGENOM" id="CLU_005350_1_0_1"/>
<dbReference type="InParanoid" id="Q9D3N8"/>
<dbReference type="OMA" id="DTMIQDS"/>
<dbReference type="OrthoDB" id="294251at2759"/>
<dbReference type="PhylomeDB" id="Q9D3N8"/>
<dbReference type="TreeFam" id="TF105771"/>
<dbReference type="BioGRID-ORCS" id="66790">
    <property type="hits" value="0 hits in 44 CRISPR screens"/>
</dbReference>
<dbReference type="ChiTaRS" id="Grtp1">
    <property type="organism name" value="mouse"/>
</dbReference>
<dbReference type="PRO" id="PR:Q9D3N8"/>
<dbReference type="Proteomes" id="UP000000589">
    <property type="component" value="Chromosome 8"/>
</dbReference>
<dbReference type="RNAct" id="Q9D3N8">
    <property type="molecule type" value="protein"/>
</dbReference>
<dbReference type="Bgee" id="ENSMUSG00000038515">
    <property type="expression patterns" value="Expressed in spermatocyte and 204 other cell types or tissues"/>
</dbReference>
<dbReference type="ExpressionAtlas" id="Q9D3N8">
    <property type="expression patterns" value="baseline and differential"/>
</dbReference>
<dbReference type="GO" id="GO:0005096">
    <property type="term" value="F:GTPase activator activity"/>
    <property type="evidence" value="ECO:0007669"/>
    <property type="project" value="UniProtKB-KW"/>
</dbReference>
<dbReference type="FunFam" id="1.10.472.80:FF:000029">
    <property type="entry name" value="Growth hormone-regulated TBC protein 1"/>
    <property type="match status" value="1"/>
</dbReference>
<dbReference type="Gene3D" id="1.10.8.270">
    <property type="entry name" value="putative rabgap domain of human tbc1 domain family member 14 like domains"/>
    <property type="match status" value="1"/>
</dbReference>
<dbReference type="Gene3D" id="1.10.10.750">
    <property type="entry name" value="Ypt/Rab-GAP domain of gyp1p, domain 1"/>
    <property type="match status" value="1"/>
</dbReference>
<dbReference type="Gene3D" id="1.10.472.80">
    <property type="entry name" value="Ypt/Rab-GAP domain of gyp1p, domain 3"/>
    <property type="match status" value="1"/>
</dbReference>
<dbReference type="InterPro" id="IPR000195">
    <property type="entry name" value="Rab-GAP-TBC_dom"/>
</dbReference>
<dbReference type="InterPro" id="IPR035969">
    <property type="entry name" value="Rab-GAP_TBC_sf"/>
</dbReference>
<dbReference type="InterPro" id="IPR050302">
    <property type="entry name" value="Rab_GAP_TBC_domain"/>
</dbReference>
<dbReference type="PANTHER" id="PTHR47219:SF10">
    <property type="entry name" value="GROWTH HORMONE-REGULATED TBC PROTEIN 1"/>
    <property type="match status" value="1"/>
</dbReference>
<dbReference type="PANTHER" id="PTHR47219">
    <property type="entry name" value="RAB GTPASE-ACTIVATING PROTEIN 1-LIKE"/>
    <property type="match status" value="1"/>
</dbReference>
<dbReference type="Pfam" id="PF00566">
    <property type="entry name" value="RabGAP-TBC"/>
    <property type="match status" value="2"/>
</dbReference>
<dbReference type="SMART" id="SM00164">
    <property type="entry name" value="TBC"/>
    <property type="match status" value="1"/>
</dbReference>
<dbReference type="SUPFAM" id="SSF47923">
    <property type="entry name" value="Ypt/Rab-GAP domain of gyp1p"/>
    <property type="match status" value="2"/>
</dbReference>
<dbReference type="PROSITE" id="PS50086">
    <property type="entry name" value="TBC_RABGAP"/>
    <property type="match status" value="1"/>
</dbReference>
<reference key="1">
    <citation type="journal article" date="2001" name="Endocrinology">
        <title>Grtp1, a novel gene regulated by growth hormone.</title>
        <authorList>
            <person name="Lu C."/>
            <person name="Kasik J."/>
            <person name="Stephan D.A."/>
            <person name="Yang S."/>
            <person name="Sperling M.A."/>
            <person name="Menon R.K."/>
        </authorList>
    </citation>
    <scope>NUCLEOTIDE SEQUENCE [MRNA] (ISOFORM 3)</scope>
    <scope>TISSUE SPECIFICITY</scope>
    <scope>DEVELOPMENTAL STAGE</scope>
</reference>
<reference key="2">
    <citation type="journal article" date="2005" name="Science">
        <title>The transcriptional landscape of the mammalian genome.</title>
        <authorList>
            <person name="Carninci P."/>
            <person name="Kasukawa T."/>
            <person name="Katayama S."/>
            <person name="Gough J."/>
            <person name="Frith M.C."/>
            <person name="Maeda N."/>
            <person name="Oyama R."/>
            <person name="Ravasi T."/>
            <person name="Lenhard B."/>
            <person name="Wells C."/>
            <person name="Kodzius R."/>
            <person name="Shimokawa K."/>
            <person name="Bajic V.B."/>
            <person name="Brenner S.E."/>
            <person name="Batalov S."/>
            <person name="Forrest A.R."/>
            <person name="Zavolan M."/>
            <person name="Davis M.J."/>
            <person name="Wilming L.G."/>
            <person name="Aidinis V."/>
            <person name="Allen J.E."/>
            <person name="Ambesi-Impiombato A."/>
            <person name="Apweiler R."/>
            <person name="Aturaliya R.N."/>
            <person name="Bailey T.L."/>
            <person name="Bansal M."/>
            <person name="Baxter L."/>
            <person name="Beisel K.W."/>
            <person name="Bersano T."/>
            <person name="Bono H."/>
            <person name="Chalk A.M."/>
            <person name="Chiu K.P."/>
            <person name="Choudhary V."/>
            <person name="Christoffels A."/>
            <person name="Clutterbuck D.R."/>
            <person name="Crowe M.L."/>
            <person name="Dalla E."/>
            <person name="Dalrymple B.P."/>
            <person name="de Bono B."/>
            <person name="Della Gatta G."/>
            <person name="di Bernardo D."/>
            <person name="Down T."/>
            <person name="Engstrom P."/>
            <person name="Fagiolini M."/>
            <person name="Faulkner G."/>
            <person name="Fletcher C.F."/>
            <person name="Fukushima T."/>
            <person name="Furuno M."/>
            <person name="Futaki S."/>
            <person name="Gariboldi M."/>
            <person name="Georgii-Hemming P."/>
            <person name="Gingeras T.R."/>
            <person name="Gojobori T."/>
            <person name="Green R.E."/>
            <person name="Gustincich S."/>
            <person name="Harbers M."/>
            <person name="Hayashi Y."/>
            <person name="Hensch T.K."/>
            <person name="Hirokawa N."/>
            <person name="Hill D."/>
            <person name="Huminiecki L."/>
            <person name="Iacono M."/>
            <person name="Ikeo K."/>
            <person name="Iwama A."/>
            <person name="Ishikawa T."/>
            <person name="Jakt M."/>
            <person name="Kanapin A."/>
            <person name="Katoh M."/>
            <person name="Kawasawa Y."/>
            <person name="Kelso J."/>
            <person name="Kitamura H."/>
            <person name="Kitano H."/>
            <person name="Kollias G."/>
            <person name="Krishnan S.P."/>
            <person name="Kruger A."/>
            <person name="Kummerfeld S.K."/>
            <person name="Kurochkin I.V."/>
            <person name="Lareau L.F."/>
            <person name="Lazarevic D."/>
            <person name="Lipovich L."/>
            <person name="Liu J."/>
            <person name="Liuni S."/>
            <person name="McWilliam S."/>
            <person name="Madan Babu M."/>
            <person name="Madera M."/>
            <person name="Marchionni L."/>
            <person name="Matsuda H."/>
            <person name="Matsuzawa S."/>
            <person name="Miki H."/>
            <person name="Mignone F."/>
            <person name="Miyake S."/>
            <person name="Morris K."/>
            <person name="Mottagui-Tabar S."/>
            <person name="Mulder N."/>
            <person name="Nakano N."/>
            <person name="Nakauchi H."/>
            <person name="Ng P."/>
            <person name="Nilsson R."/>
            <person name="Nishiguchi S."/>
            <person name="Nishikawa S."/>
            <person name="Nori F."/>
            <person name="Ohara O."/>
            <person name="Okazaki Y."/>
            <person name="Orlando V."/>
            <person name="Pang K.C."/>
            <person name="Pavan W.J."/>
            <person name="Pavesi G."/>
            <person name="Pesole G."/>
            <person name="Petrovsky N."/>
            <person name="Piazza S."/>
            <person name="Reed J."/>
            <person name="Reid J.F."/>
            <person name="Ring B.Z."/>
            <person name="Ringwald M."/>
            <person name="Rost B."/>
            <person name="Ruan Y."/>
            <person name="Salzberg S.L."/>
            <person name="Sandelin A."/>
            <person name="Schneider C."/>
            <person name="Schoenbach C."/>
            <person name="Sekiguchi K."/>
            <person name="Semple C.A."/>
            <person name="Seno S."/>
            <person name="Sessa L."/>
            <person name="Sheng Y."/>
            <person name="Shibata Y."/>
            <person name="Shimada H."/>
            <person name="Shimada K."/>
            <person name="Silva D."/>
            <person name="Sinclair B."/>
            <person name="Sperling S."/>
            <person name="Stupka E."/>
            <person name="Sugiura K."/>
            <person name="Sultana R."/>
            <person name="Takenaka Y."/>
            <person name="Taki K."/>
            <person name="Tammoja K."/>
            <person name="Tan S.L."/>
            <person name="Tang S."/>
            <person name="Taylor M.S."/>
            <person name="Tegner J."/>
            <person name="Teichmann S.A."/>
            <person name="Ueda H.R."/>
            <person name="van Nimwegen E."/>
            <person name="Verardo R."/>
            <person name="Wei C.L."/>
            <person name="Yagi K."/>
            <person name="Yamanishi H."/>
            <person name="Zabarovsky E."/>
            <person name="Zhu S."/>
            <person name="Zimmer A."/>
            <person name="Hide W."/>
            <person name="Bult C."/>
            <person name="Grimmond S.M."/>
            <person name="Teasdale R.D."/>
            <person name="Liu E.T."/>
            <person name="Brusic V."/>
            <person name="Quackenbush J."/>
            <person name="Wahlestedt C."/>
            <person name="Mattick J.S."/>
            <person name="Hume D.A."/>
            <person name="Kai C."/>
            <person name="Sasaki D."/>
            <person name="Tomaru Y."/>
            <person name="Fukuda S."/>
            <person name="Kanamori-Katayama M."/>
            <person name="Suzuki M."/>
            <person name="Aoki J."/>
            <person name="Arakawa T."/>
            <person name="Iida J."/>
            <person name="Imamura K."/>
            <person name="Itoh M."/>
            <person name="Kato T."/>
            <person name="Kawaji H."/>
            <person name="Kawagashira N."/>
            <person name="Kawashima T."/>
            <person name="Kojima M."/>
            <person name="Kondo S."/>
            <person name="Konno H."/>
            <person name="Nakano K."/>
            <person name="Ninomiya N."/>
            <person name="Nishio T."/>
            <person name="Okada M."/>
            <person name="Plessy C."/>
            <person name="Shibata K."/>
            <person name="Shiraki T."/>
            <person name="Suzuki S."/>
            <person name="Tagami M."/>
            <person name="Waki K."/>
            <person name="Watahiki A."/>
            <person name="Okamura-Oho Y."/>
            <person name="Suzuki H."/>
            <person name="Kawai J."/>
            <person name="Hayashizaki Y."/>
        </authorList>
    </citation>
    <scope>NUCLEOTIDE SEQUENCE [LARGE SCALE MRNA] (ISOFORMS 1; 2; 3 AND 4)</scope>
    <source>
        <strain>C57BL/6J</strain>
        <tissue>Embryonic stem cell</tissue>
        <tissue>Head</tissue>
        <tissue>Ovary</tissue>
        <tissue>Pancreas</tissue>
        <tissue>Retina</tissue>
        <tissue>Uterus</tissue>
    </source>
</reference>
<reference key="3">
    <citation type="journal article" date="2004" name="Genome Res.">
        <title>The status, quality, and expansion of the NIH full-length cDNA project: the Mammalian Gene Collection (MGC).</title>
        <authorList>
            <consortium name="The MGC Project Team"/>
        </authorList>
    </citation>
    <scope>NUCLEOTIDE SEQUENCE [LARGE SCALE MRNA] (ISOFORM 2)</scope>
    <source>
        <strain>FVB/N</strain>
        <tissue>Mammary tumor</tissue>
    </source>
</reference>
<reference key="4">
    <citation type="journal article" date="2010" name="Cell">
        <title>A tissue-specific atlas of mouse protein phosphorylation and expression.</title>
        <authorList>
            <person name="Huttlin E.L."/>
            <person name="Jedrychowski M.P."/>
            <person name="Elias J.E."/>
            <person name="Goswami T."/>
            <person name="Rad R."/>
            <person name="Beausoleil S.A."/>
            <person name="Villen J."/>
            <person name="Haas W."/>
            <person name="Sowa M.E."/>
            <person name="Gygi S.P."/>
        </authorList>
    </citation>
    <scope>IDENTIFICATION BY MASS SPECTROMETRY [LARGE SCALE ANALYSIS]</scope>
    <source>
        <tissue>Kidney</tissue>
    </source>
</reference>
<protein>
    <recommendedName>
        <fullName>Growth hormone-regulated TBC protein 1</fullName>
    </recommendedName>
    <alternativeName>
        <fullName>TBC1 domain family member 6</fullName>
    </alternativeName>
</protein>
<keyword id="KW-0025">Alternative splicing</keyword>
<keyword id="KW-0343">GTPase activation</keyword>
<keyword id="KW-1185">Reference proteome</keyword>
<organism>
    <name type="scientific">Mus musculus</name>
    <name type="common">Mouse</name>
    <dbReference type="NCBI Taxonomy" id="10090"/>
    <lineage>
        <taxon>Eukaryota</taxon>
        <taxon>Metazoa</taxon>
        <taxon>Chordata</taxon>
        <taxon>Craniata</taxon>
        <taxon>Vertebrata</taxon>
        <taxon>Euteleostomi</taxon>
        <taxon>Mammalia</taxon>
        <taxon>Eutheria</taxon>
        <taxon>Euarchontoglires</taxon>
        <taxon>Glires</taxon>
        <taxon>Rodentia</taxon>
        <taxon>Myomorpha</taxon>
        <taxon>Muroidea</taxon>
        <taxon>Muridae</taxon>
        <taxon>Murinae</taxon>
        <taxon>Mus</taxon>
        <taxon>Mus</taxon>
    </lineage>
</organism>
<feature type="chain" id="PRO_0000288709" description="Growth hormone-regulated TBC protein 1">
    <location>
        <begin position="1"/>
        <end position="359"/>
    </location>
</feature>
<feature type="domain" description="Rab-GAP TBC" evidence="1">
    <location>
        <begin position="74"/>
        <end position="281"/>
    </location>
</feature>
<feature type="splice variant" id="VSP_025756" description="In isoform 3." evidence="3 5">
    <location>
        <begin position="1"/>
        <end position="84"/>
    </location>
</feature>
<feature type="splice variant" id="VSP_025757" description="In isoform 2, isoform 3 and isoform 4." evidence="3 4 5">
    <location>
        <begin position="162"/>
        <end position="178"/>
    </location>
</feature>
<feature type="splice variant" id="VSP_025758" description="In isoform 4." evidence="5">
    <original>KIFSEPGSLSMTTITRLRKSCRAALQAQS</original>
    <variation>AATTSLLP</variation>
    <location>
        <begin position="331"/>
        <end position="359"/>
    </location>
</feature>
<feature type="sequence conflict" description="In Ref. 2; BAB30630." evidence="6" ref="2">
    <original>A</original>
    <variation>P</variation>
    <location>
        <position position="216"/>
    </location>
</feature>
<feature type="sequence conflict" description="In Ref. 1; AAL67673." evidence="6" ref="1">
    <original>I</original>
    <variation>T</variation>
    <location>
        <position position="273"/>
    </location>
</feature>
<feature type="sequence conflict" description="In Ref. 1; AAL67673." evidence="6" ref="1">
    <original>E</original>
    <variation>G</variation>
    <location>
        <position position="324"/>
    </location>
</feature>
<name>GRTP1_MOUSE</name>
<sequence length="359" mass="40628">MDPAERAQAARARVPRIDPYGFERPEDFDYAAYEEFFSTYLVILTKRAIKWSKLLKGNGGVRKSVTVKRYVRKGIPLEHRARVWMAVSGAQARMDQSPGYYHRLLEGESSSSLDEAIRTDLNRTFPDNVMFRKTADPCLQKTLYNVLLAYGLHNPDVGYCQCCAQKPGSSAGLRSSLTGMNFIAGYLILITKNEEESFWLLDALVGRILPDYYSPAMLGLKTDQEVLAELVRMKLPAVAALMDGHGVLWTLLVSRWFICLFVDILPVETVLRIWDCLFNEGSKIIFRVALTLIKQHQEFILEASSIPDICDKFKQITKGDFVTECHAFMQKIFSEPGSLSMTTITRLRKSCRAALQAQS</sequence>
<comment type="function">
    <text>May act as a GTPase-activating protein for Rab family protein(s).</text>
</comment>
<comment type="alternative products">
    <event type="alternative splicing"/>
    <isoform>
        <id>Q9D3N8-1</id>
        <name>1</name>
        <sequence type="displayed"/>
    </isoform>
    <isoform>
        <id>Q9D3N8-2</id>
        <name>2</name>
        <sequence type="described" ref="VSP_025757"/>
    </isoform>
    <isoform>
        <id>Q9D3N8-3</id>
        <name>3</name>
        <sequence type="described" ref="VSP_025756 VSP_025757"/>
    </isoform>
    <isoform>
        <id>Q9D3N8-4</id>
        <name>4</name>
        <sequence type="described" ref="VSP_025757 VSP_025758"/>
    </isoform>
</comment>
<comment type="tissue specificity">
    <text evidence="2">Highly expressed in testes, expression greatly increased at postnatal day 20 and remained high up to day 90. Moderately expressed in kidney and liver, weakly expressed in intestine, lung, ovaries and stomach. Expression of Growth hormone increased the expression in testis but decreased expression in liver and kidney.</text>
</comment>
<comment type="developmental stage">
    <text evidence="2">Weakly expressed in the testis of the embryo and neonate.</text>
</comment>